<protein>
    <recommendedName>
        <fullName evidence="1">Small ribosomal subunit protein uS8</fullName>
    </recommendedName>
    <alternativeName>
        <fullName evidence="2">30S ribosomal protein S8</fullName>
    </alternativeName>
</protein>
<reference key="1">
    <citation type="journal article" date="2009" name="Appl. Environ. Microbiol.">
        <title>Genome analysis of the meat starter culture bacterium Staphylococcus carnosus TM300.</title>
        <authorList>
            <person name="Rosenstein R."/>
            <person name="Nerz C."/>
            <person name="Biswas L."/>
            <person name="Resch A."/>
            <person name="Raddatz G."/>
            <person name="Schuster S.C."/>
            <person name="Goetz F."/>
        </authorList>
    </citation>
    <scope>NUCLEOTIDE SEQUENCE [LARGE SCALE GENOMIC DNA]</scope>
    <source>
        <strain>TM300</strain>
    </source>
</reference>
<keyword id="KW-1185">Reference proteome</keyword>
<keyword id="KW-0687">Ribonucleoprotein</keyword>
<keyword id="KW-0689">Ribosomal protein</keyword>
<keyword id="KW-0694">RNA-binding</keyword>
<keyword id="KW-0699">rRNA-binding</keyword>
<accession>B9DM33</accession>
<organism>
    <name type="scientific">Staphylococcus carnosus (strain TM300)</name>
    <dbReference type="NCBI Taxonomy" id="396513"/>
    <lineage>
        <taxon>Bacteria</taxon>
        <taxon>Bacillati</taxon>
        <taxon>Bacillota</taxon>
        <taxon>Bacilli</taxon>
        <taxon>Bacillales</taxon>
        <taxon>Staphylococcaceae</taxon>
        <taxon>Staphylococcus</taxon>
    </lineage>
</organism>
<sequence>MTMSDPIADMLTRVRNANMVRHEKIELPASNIKKQIAEILKSEGFIKNVEFVEDDKQGVLRLFLKYGQNNERVITGLKRISKPGLRVYAKADEVPKVLNGLGIALVSTSEGIVTDREARKRNVGGEVLAYVW</sequence>
<dbReference type="EMBL" id="AM295250">
    <property type="protein sequence ID" value="CAL28627.1"/>
    <property type="molecule type" value="Genomic_DNA"/>
</dbReference>
<dbReference type="RefSeq" id="WP_015900965.1">
    <property type="nucleotide sequence ID" value="NC_012121.1"/>
</dbReference>
<dbReference type="SMR" id="B9DM33"/>
<dbReference type="GeneID" id="93794180"/>
<dbReference type="KEGG" id="sca:SCA_1721"/>
<dbReference type="eggNOG" id="COG0096">
    <property type="taxonomic scope" value="Bacteria"/>
</dbReference>
<dbReference type="HOGENOM" id="CLU_098428_0_2_9"/>
<dbReference type="OrthoDB" id="9802617at2"/>
<dbReference type="BioCyc" id="SCAR396513:SCA_RS08770-MONOMER"/>
<dbReference type="Proteomes" id="UP000000444">
    <property type="component" value="Chromosome"/>
</dbReference>
<dbReference type="GO" id="GO:1990904">
    <property type="term" value="C:ribonucleoprotein complex"/>
    <property type="evidence" value="ECO:0007669"/>
    <property type="project" value="UniProtKB-KW"/>
</dbReference>
<dbReference type="GO" id="GO:0005840">
    <property type="term" value="C:ribosome"/>
    <property type="evidence" value="ECO:0007669"/>
    <property type="project" value="UniProtKB-KW"/>
</dbReference>
<dbReference type="GO" id="GO:0019843">
    <property type="term" value="F:rRNA binding"/>
    <property type="evidence" value="ECO:0007669"/>
    <property type="project" value="UniProtKB-UniRule"/>
</dbReference>
<dbReference type="GO" id="GO:0003735">
    <property type="term" value="F:structural constituent of ribosome"/>
    <property type="evidence" value="ECO:0007669"/>
    <property type="project" value="InterPro"/>
</dbReference>
<dbReference type="GO" id="GO:0006412">
    <property type="term" value="P:translation"/>
    <property type="evidence" value="ECO:0007669"/>
    <property type="project" value="UniProtKB-UniRule"/>
</dbReference>
<dbReference type="FunFam" id="3.30.1370.30:FF:000002">
    <property type="entry name" value="30S ribosomal protein S8"/>
    <property type="match status" value="1"/>
</dbReference>
<dbReference type="FunFam" id="3.30.1490.10:FF:000001">
    <property type="entry name" value="30S ribosomal protein S8"/>
    <property type="match status" value="1"/>
</dbReference>
<dbReference type="Gene3D" id="3.30.1370.30">
    <property type="match status" value="1"/>
</dbReference>
<dbReference type="Gene3D" id="3.30.1490.10">
    <property type="match status" value="1"/>
</dbReference>
<dbReference type="HAMAP" id="MF_01302_B">
    <property type="entry name" value="Ribosomal_uS8_B"/>
    <property type="match status" value="1"/>
</dbReference>
<dbReference type="InterPro" id="IPR000630">
    <property type="entry name" value="Ribosomal_uS8"/>
</dbReference>
<dbReference type="InterPro" id="IPR047863">
    <property type="entry name" value="Ribosomal_uS8_CS"/>
</dbReference>
<dbReference type="InterPro" id="IPR035987">
    <property type="entry name" value="Ribosomal_uS8_sf"/>
</dbReference>
<dbReference type="NCBIfam" id="NF001109">
    <property type="entry name" value="PRK00136.1"/>
    <property type="match status" value="1"/>
</dbReference>
<dbReference type="PANTHER" id="PTHR11758">
    <property type="entry name" value="40S RIBOSOMAL PROTEIN S15A"/>
    <property type="match status" value="1"/>
</dbReference>
<dbReference type="Pfam" id="PF00410">
    <property type="entry name" value="Ribosomal_S8"/>
    <property type="match status" value="1"/>
</dbReference>
<dbReference type="SUPFAM" id="SSF56047">
    <property type="entry name" value="Ribosomal protein S8"/>
    <property type="match status" value="1"/>
</dbReference>
<dbReference type="PROSITE" id="PS00053">
    <property type="entry name" value="RIBOSOMAL_S8"/>
    <property type="match status" value="1"/>
</dbReference>
<comment type="function">
    <text evidence="1">One of the primary rRNA binding proteins, it binds directly to 16S rRNA central domain where it helps coordinate assembly of the platform of the 30S subunit.</text>
</comment>
<comment type="subunit">
    <text evidence="1">Part of the 30S ribosomal subunit. Contacts proteins S5 and S12.</text>
</comment>
<comment type="similarity">
    <text evidence="1">Belongs to the universal ribosomal protein uS8 family.</text>
</comment>
<proteinExistence type="inferred from homology"/>
<name>RS8_STACT</name>
<evidence type="ECO:0000255" key="1">
    <source>
        <dbReference type="HAMAP-Rule" id="MF_01302"/>
    </source>
</evidence>
<evidence type="ECO:0000305" key="2"/>
<gene>
    <name evidence="1" type="primary">rpsH</name>
    <name type="ordered locus">Sca_1721</name>
</gene>
<feature type="chain" id="PRO_1000165350" description="Small ribosomal subunit protein uS8">
    <location>
        <begin position="1"/>
        <end position="132"/>
    </location>
</feature>